<evidence type="ECO:0000255" key="1">
    <source>
        <dbReference type="HAMAP-Rule" id="MF_00333"/>
    </source>
</evidence>
<name>HEM6_FRATN</name>
<feature type="chain" id="PRO_1000133185" description="Oxygen-dependent coproporphyrinogen-III oxidase">
    <location>
        <begin position="1"/>
        <end position="308"/>
    </location>
</feature>
<feature type="region of interest" description="Important for dimerization" evidence="1">
    <location>
        <begin position="248"/>
        <end position="283"/>
    </location>
</feature>
<feature type="active site" description="Proton donor" evidence="1">
    <location>
        <position position="114"/>
    </location>
</feature>
<feature type="binding site" evidence="1">
    <location>
        <position position="100"/>
    </location>
    <ligand>
        <name>substrate</name>
    </ligand>
</feature>
<feature type="binding site" evidence="1">
    <location>
        <position position="104"/>
    </location>
    <ligand>
        <name>a divalent metal cation</name>
        <dbReference type="ChEBI" id="CHEBI:60240"/>
    </ligand>
</feature>
<feature type="binding site" evidence="1">
    <location>
        <position position="114"/>
    </location>
    <ligand>
        <name>a divalent metal cation</name>
        <dbReference type="ChEBI" id="CHEBI:60240"/>
    </ligand>
</feature>
<feature type="binding site" evidence="1">
    <location>
        <begin position="116"/>
        <end position="118"/>
    </location>
    <ligand>
        <name>substrate</name>
    </ligand>
</feature>
<feature type="binding site" evidence="1">
    <location>
        <position position="153"/>
    </location>
    <ligand>
        <name>a divalent metal cation</name>
        <dbReference type="ChEBI" id="CHEBI:60240"/>
    </ligand>
</feature>
<feature type="binding site" evidence="1">
    <location>
        <position position="183"/>
    </location>
    <ligand>
        <name>a divalent metal cation</name>
        <dbReference type="ChEBI" id="CHEBI:60240"/>
    </ligand>
</feature>
<feature type="binding site" evidence="1">
    <location>
        <begin position="266"/>
        <end position="268"/>
    </location>
    <ligand>
        <name>substrate</name>
    </ligand>
</feature>
<feature type="site" description="Important for dimerization" evidence="1">
    <location>
        <position position="183"/>
    </location>
</feature>
<organism>
    <name type="scientific">Francisella tularensis subsp. novicida (strain U112)</name>
    <dbReference type="NCBI Taxonomy" id="401614"/>
    <lineage>
        <taxon>Bacteria</taxon>
        <taxon>Pseudomonadati</taxon>
        <taxon>Pseudomonadota</taxon>
        <taxon>Gammaproteobacteria</taxon>
        <taxon>Thiotrichales</taxon>
        <taxon>Francisellaceae</taxon>
        <taxon>Francisella</taxon>
    </lineage>
</organism>
<protein>
    <recommendedName>
        <fullName evidence="1">Oxygen-dependent coproporphyrinogen-III oxidase</fullName>
        <shortName evidence="1">CPO</shortName>
        <shortName evidence="1">Coprogen oxidase</shortName>
        <shortName evidence="1">Coproporphyrinogenase</shortName>
        <ecNumber evidence="1">1.3.3.3</ecNumber>
    </recommendedName>
</protein>
<accession>A0Q6H6</accession>
<reference key="1">
    <citation type="journal article" date="2007" name="Genome Biol.">
        <title>Comparison of Francisella tularensis genomes reveals evolutionary events associated with the emergence of human pathogenic strains.</title>
        <authorList>
            <person name="Rohmer L."/>
            <person name="Fong C."/>
            <person name="Abmayr S."/>
            <person name="Wasnick M."/>
            <person name="Larson Freeman T.J."/>
            <person name="Radey M."/>
            <person name="Guina T."/>
            <person name="Svensson K."/>
            <person name="Hayden H.S."/>
            <person name="Jacobs M."/>
            <person name="Gallagher L.A."/>
            <person name="Manoil C."/>
            <person name="Ernst R.K."/>
            <person name="Drees B."/>
            <person name="Buckley D."/>
            <person name="Haugen E."/>
            <person name="Bovee D."/>
            <person name="Zhou Y."/>
            <person name="Chang J."/>
            <person name="Levy R."/>
            <person name="Lim R."/>
            <person name="Gillett W."/>
            <person name="Guenthener D."/>
            <person name="Kang A."/>
            <person name="Shaffer S.A."/>
            <person name="Taylor G."/>
            <person name="Chen J."/>
            <person name="Gallis B."/>
            <person name="D'Argenio D.A."/>
            <person name="Forsman M."/>
            <person name="Olson M.V."/>
            <person name="Goodlett D.R."/>
            <person name="Kaul R."/>
            <person name="Miller S.I."/>
            <person name="Brittnacher M.J."/>
        </authorList>
    </citation>
    <scope>NUCLEOTIDE SEQUENCE [LARGE SCALE GENOMIC DNA]</scope>
    <source>
        <strain>U112</strain>
    </source>
</reference>
<comment type="function">
    <text evidence="1">Involved in the heme biosynthesis. Catalyzes the aerobic oxidative decarboxylation of propionate groups of rings A and B of coproporphyrinogen-III to yield the vinyl groups in protoporphyrinogen-IX.</text>
</comment>
<comment type="catalytic activity">
    <reaction evidence="1">
        <text>coproporphyrinogen III + O2 + 2 H(+) = protoporphyrinogen IX + 2 CO2 + 2 H2O</text>
        <dbReference type="Rhea" id="RHEA:18257"/>
        <dbReference type="ChEBI" id="CHEBI:15377"/>
        <dbReference type="ChEBI" id="CHEBI:15378"/>
        <dbReference type="ChEBI" id="CHEBI:15379"/>
        <dbReference type="ChEBI" id="CHEBI:16526"/>
        <dbReference type="ChEBI" id="CHEBI:57307"/>
        <dbReference type="ChEBI" id="CHEBI:57309"/>
        <dbReference type="EC" id="1.3.3.3"/>
    </reaction>
</comment>
<comment type="cofactor">
    <cofactor evidence="1">
        <name>a divalent metal cation</name>
        <dbReference type="ChEBI" id="CHEBI:60240"/>
    </cofactor>
</comment>
<comment type="pathway">
    <text evidence="1">Porphyrin-containing compound metabolism; protoporphyrin-IX biosynthesis; protoporphyrinogen-IX from coproporphyrinogen-III (O2 route): step 1/1.</text>
</comment>
<comment type="subunit">
    <text evidence="1">Homodimer.</text>
</comment>
<comment type="subcellular location">
    <subcellularLocation>
        <location evidence="1">Cytoplasm</location>
    </subcellularLocation>
</comment>
<comment type="similarity">
    <text evidence="1">Belongs to the aerobic coproporphyrinogen-III oxidase family.</text>
</comment>
<dbReference type="EC" id="1.3.3.3" evidence="1"/>
<dbReference type="EMBL" id="CP000439">
    <property type="protein sequence ID" value="ABK89841.1"/>
    <property type="molecule type" value="Genomic_DNA"/>
</dbReference>
<dbReference type="RefSeq" id="WP_003039333.1">
    <property type="nucleotide sequence ID" value="NC_008601.1"/>
</dbReference>
<dbReference type="SMR" id="A0Q6H6"/>
<dbReference type="KEGG" id="ftn:FTN_0953"/>
<dbReference type="KEGG" id="ftx:AW25_1059"/>
<dbReference type="BioCyc" id="FTUL401614:G1G75-993-MONOMER"/>
<dbReference type="UniPathway" id="UPA00251">
    <property type="reaction ID" value="UER00322"/>
</dbReference>
<dbReference type="Proteomes" id="UP000000762">
    <property type="component" value="Chromosome"/>
</dbReference>
<dbReference type="GO" id="GO:0005737">
    <property type="term" value="C:cytoplasm"/>
    <property type="evidence" value="ECO:0007669"/>
    <property type="project" value="UniProtKB-SubCell"/>
</dbReference>
<dbReference type="GO" id="GO:0004109">
    <property type="term" value="F:coproporphyrinogen oxidase activity"/>
    <property type="evidence" value="ECO:0007669"/>
    <property type="project" value="UniProtKB-UniRule"/>
</dbReference>
<dbReference type="GO" id="GO:0046872">
    <property type="term" value="F:metal ion binding"/>
    <property type="evidence" value="ECO:0007669"/>
    <property type="project" value="UniProtKB-KW"/>
</dbReference>
<dbReference type="GO" id="GO:0042803">
    <property type="term" value="F:protein homodimerization activity"/>
    <property type="evidence" value="ECO:0000250"/>
    <property type="project" value="UniProtKB"/>
</dbReference>
<dbReference type="GO" id="GO:0006782">
    <property type="term" value="P:protoporphyrinogen IX biosynthetic process"/>
    <property type="evidence" value="ECO:0007669"/>
    <property type="project" value="UniProtKB-UniRule"/>
</dbReference>
<dbReference type="FunFam" id="3.40.1500.10:FF:000010">
    <property type="entry name" value="Oxygen-dependent coproporphyrinogen-III oxidase"/>
    <property type="match status" value="1"/>
</dbReference>
<dbReference type="Gene3D" id="3.40.1500.10">
    <property type="entry name" value="Coproporphyrinogen III oxidase, aerobic"/>
    <property type="match status" value="1"/>
</dbReference>
<dbReference type="HAMAP" id="MF_00333">
    <property type="entry name" value="Coprogen_oxidas"/>
    <property type="match status" value="1"/>
</dbReference>
<dbReference type="InterPro" id="IPR001260">
    <property type="entry name" value="Coprogen_oxidase_aer"/>
</dbReference>
<dbReference type="InterPro" id="IPR036406">
    <property type="entry name" value="Coprogen_oxidase_aer_sf"/>
</dbReference>
<dbReference type="InterPro" id="IPR018375">
    <property type="entry name" value="Coprogen_oxidase_CS"/>
</dbReference>
<dbReference type="NCBIfam" id="NF003727">
    <property type="entry name" value="PRK05330.1"/>
    <property type="match status" value="1"/>
</dbReference>
<dbReference type="PANTHER" id="PTHR10755">
    <property type="entry name" value="COPROPORPHYRINOGEN III OXIDASE, MITOCHONDRIAL"/>
    <property type="match status" value="1"/>
</dbReference>
<dbReference type="PANTHER" id="PTHR10755:SF0">
    <property type="entry name" value="OXYGEN-DEPENDENT COPROPORPHYRINOGEN-III OXIDASE, MITOCHONDRIAL"/>
    <property type="match status" value="1"/>
</dbReference>
<dbReference type="Pfam" id="PF01218">
    <property type="entry name" value="Coprogen_oxidas"/>
    <property type="match status" value="1"/>
</dbReference>
<dbReference type="PIRSF" id="PIRSF000166">
    <property type="entry name" value="Coproporphyri_ox"/>
    <property type="match status" value="1"/>
</dbReference>
<dbReference type="PRINTS" id="PR00073">
    <property type="entry name" value="COPRGNOXDASE"/>
</dbReference>
<dbReference type="SUPFAM" id="SSF102886">
    <property type="entry name" value="Coproporphyrinogen III oxidase"/>
    <property type="match status" value="1"/>
</dbReference>
<dbReference type="PROSITE" id="PS01021">
    <property type="entry name" value="COPROGEN_OXIDASE"/>
    <property type="match status" value="1"/>
</dbReference>
<keyword id="KW-0963">Cytoplasm</keyword>
<keyword id="KW-0350">Heme biosynthesis</keyword>
<keyword id="KW-0479">Metal-binding</keyword>
<keyword id="KW-0560">Oxidoreductase</keyword>
<keyword id="KW-0627">Porphyrin biosynthesis</keyword>
<sequence>MQEKISKFEDFLTQLQQNITTALEQHETNAAKFISDKWQKPDTPDQKLKGYGNSMIIEGGEIFEKGVVAFSRVHGSELPPSATAKRQELAGKSFIATGLSLVIHPRNPFVPTSHANFRIFIAGADTDTPIWWFGGGFDLTPYYPFEEDAIHWHQTAKNICDKHDKTYYSKFKKWCDEYFYLKHRDECRGVGGLFFDDLNDKSFDECFNFVTDCANSYLDAYIPIVAQRKNIEYSQKHKDFQLYRRGRYVEFNLVFDRGTIFGLQSGGRTESILSSMPPMASWRYNWQPEQNSEEAKVYQYIKPRDWIK</sequence>
<gene>
    <name evidence="1" type="primary">hemF</name>
    <name type="ordered locus">FTN_0953</name>
</gene>
<proteinExistence type="inferred from homology"/>